<sequence>MAAITASMVAELRAKTDAPMMECKKALTEAEGNMEKAEEILRVKLGNKAGKAAARITAEGVIASFIDGTIGALVELNCETDFVSRNDDFLGFANEIAKLIATQNPADVAALSALSIGDETVEAVRTRLIGKIGENMTIRRFQRFEGTKLASYLHGTRIGVMVAFDGDEVAAKDVAMHAAAMKPVALSSDEVPAELIAKERSIAEQKAAESGKPAEIVAKMVEGSVQKYLKEVSLLNQPFVKNDKQTVEQMLKAANTTVKGFTLFVVGEGIEKKQDDFAAEVAAQVAAAKQQA</sequence>
<feature type="chain" id="PRO_0000161179" description="Elongation factor Ts">
    <location>
        <begin position="1"/>
        <end position="292"/>
    </location>
</feature>
<feature type="region of interest" description="Involved in Mg(2+) ion dislocation from EF-Tu" evidence="1">
    <location>
        <begin position="80"/>
        <end position="83"/>
    </location>
</feature>
<keyword id="KW-0963">Cytoplasm</keyword>
<keyword id="KW-0251">Elongation factor</keyword>
<keyword id="KW-0648">Protein biosynthesis</keyword>
<keyword id="KW-1185">Reference proteome</keyword>
<evidence type="ECO:0000255" key="1">
    <source>
        <dbReference type="HAMAP-Rule" id="MF_00050"/>
    </source>
</evidence>
<evidence type="ECO:0000305" key="2"/>
<proteinExistence type="inferred from homology"/>
<name>EFTS_RALN1</name>
<comment type="function">
    <text evidence="1">Associates with the EF-Tu.GDP complex and induces the exchange of GDP to GTP. It remains bound to the aminoacyl-tRNA.EF-Tu.GTP complex up to the GTP hydrolysis stage on the ribosome.</text>
</comment>
<comment type="subcellular location">
    <subcellularLocation>
        <location evidence="1">Cytoplasm</location>
    </subcellularLocation>
</comment>
<comment type="similarity">
    <text evidence="1">Belongs to the EF-Ts family.</text>
</comment>
<comment type="sequence caution" evidence="2">
    <conflict type="erroneous initiation">
        <sequence resource="EMBL-CDS" id="CAD15107"/>
    </conflict>
</comment>
<dbReference type="EMBL" id="AL646052">
    <property type="protein sequence ID" value="CAD15107.1"/>
    <property type="status" value="ALT_INIT"/>
    <property type="molecule type" value="Genomic_DNA"/>
</dbReference>
<dbReference type="RefSeq" id="WP_011001354.1">
    <property type="nucleotide sequence ID" value="NC_003295.1"/>
</dbReference>
<dbReference type="SMR" id="Q8XZJ0"/>
<dbReference type="STRING" id="267608.RSc1405"/>
<dbReference type="EnsemblBacteria" id="CAD15107">
    <property type="protein sequence ID" value="CAD15107"/>
    <property type="gene ID" value="RSc1405"/>
</dbReference>
<dbReference type="KEGG" id="rso:RSc1405"/>
<dbReference type="eggNOG" id="COG0264">
    <property type="taxonomic scope" value="Bacteria"/>
</dbReference>
<dbReference type="HOGENOM" id="CLU_047155_0_2_4"/>
<dbReference type="Proteomes" id="UP000001436">
    <property type="component" value="Chromosome"/>
</dbReference>
<dbReference type="GO" id="GO:0005737">
    <property type="term" value="C:cytoplasm"/>
    <property type="evidence" value="ECO:0007669"/>
    <property type="project" value="UniProtKB-SubCell"/>
</dbReference>
<dbReference type="GO" id="GO:0003746">
    <property type="term" value="F:translation elongation factor activity"/>
    <property type="evidence" value="ECO:0007669"/>
    <property type="project" value="UniProtKB-UniRule"/>
</dbReference>
<dbReference type="CDD" id="cd14275">
    <property type="entry name" value="UBA_EF-Ts"/>
    <property type="match status" value="1"/>
</dbReference>
<dbReference type="FunFam" id="1.10.286.20:FF:000001">
    <property type="entry name" value="Elongation factor Ts"/>
    <property type="match status" value="1"/>
</dbReference>
<dbReference type="FunFam" id="1.10.8.10:FF:000001">
    <property type="entry name" value="Elongation factor Ts"/>
    <property type="match status" value="1"/>
</dbReference>
<dbReference type="Gene3D" id="1.10.286.20">
    <property type="match status" value="1"/>
</dbReference>
<dbReference type="Gene3D" id="1.10.8.10">
    <property type="entry name" value="DNA helicase RuvA subunit, C-terminal domain"/>
    <property type="match status" value="1"/>
</dbReference>
<dbReference type="Gene3D" id="3.30.479.20">
    <property type="entry name" value="Elongation factor Ts, dimerisation domain"/>
    <property type="match status" value="2"/>
</dbReference>
<dbReference type="HAMAP" id="MF_00050">
    <property type="entry name" value="EF_Ts"/>
    <property type="match status" value="1"/>
</dbReference>
<dbReference type="InterPro" id="IPR036402">
    <property type="entry name" value="EF-Ts_dimer_sf"/>
</dbReference>
<dbReference type="InterPro" id="IPR001816">
    <property type="entry name" value="Transl_elong_EFTs/EF1B"/>
</dbReference>
<dbReference type="InterPro" id="IPR014039">
    <property type="entry name" value="Transl_elong_EFTs/EF1B_dimer"/>
</dbReference>
<dbReference type="InterPro" id="IPR018101">
    <property type="entry name" value="Transl_elong_Ts_CS"/>
</dbReference>
<dbReference type="InterPro" id="IPR009060">
    <property type="entry name" value="UBA-like_sf"/>
</dbReference>
<dbReference type="NCBIfam" id="TIGR00116">
    <property type="entry name" value="tsf"/>
    <property type="match status" value="1"/>
</dbReference>
<dbReference type="PANTHER" id="PTHR11741">
    <property type="entry name" value="ELONGATION FACTOR TS"/>
    <property type="match status" value="1"/>
</dbReference>
<dbReference type="PANTHER" id="PTHR11741:SF0">
    <property type="entry name" value="ELONGATION FACTOR TS, MITOCHONDRIAL"/>
    <property type="match status" value="1"/>
</dbReference>
<dbReference type="Pfam" id="PF00889">
    <property type="entry name" value="EF_TS"/>
    <property type="match status" value="1"/>
</dbReference>
<dbReference type="SUPFAM" id="SSF54713">
    <property type="entry name" value="Elongation factor Ts (EF-Ts), dimerisation domain"/>
    <property type="match status" value="2"/>
</dbReference>
<dbReference type="SUPFAM" id="SSF46934">
    <property type="entry name" value="UBA-like"/>
    <property type="match status" value="1"/>
</dbReference>
<dbReference type="PROSITE" id="PS01127">
    <property type="entry name" value="EF_TS_2"/>
    <property type="match status" value="1"/>
</dbReference>
<protein>
    <recommendedName>
        <fullName evidence="1">Elongation factor Ts</fullName>
        <shortName evidence="1">EF-Ts</shortName>
    </recommendedName>
</protein>
<gene>
    <name evidence="1" type="primary">tsf</name>
    <name type="ordered locus">RSc1405</name>
    <name type="ORF">RS05287</name>
</gene>
<reference key="1">
    <citation type="journal article" date="2002" name="Nature">
        <title>Genome sequence of the plant pathogen Ralstonia solanacearum.</title>
        <authorList>
            <person name="Salanoubat M."/>
            <person name="Genin S."/>
            <person name="Artiguenave F."/>
            <person name="Gouzy J."/>
            <person name="Mangenot S."/>
            <person name="Arlat M."/>
            <person name="Billault A."/>
            <person name="Brottier P."/>
            <person name="Camus J.-C."/>
            <person name="Cattolico L."/>
            <person name="Chandler M."/>
            <person name="Choisne N."/>
            <person name="Claudel-Renard C."/>
            <person name="Cunnac S."/>
            <person name="Demange N."/>
            <person name="Gaspin C."/>
            <person name="Lavie M."/>
            <person name="Moisan A."/>
            <person name="Robert C."/>
            <person name="Saurin W."/>
            <person name="Schiex T."/>
            <person name="Siguier P."/>
            <person name="Thebault P."/>
            <person name="Whalen M."/>
            <person name="Wincker P."/>
            <person name="Levy M."/>
            <person name="Weissenbach J."/>
            <person name="Boucher C.A."/>
        </authorList>
    </citation>
    <scope>NUCLEOTIDE SEQUENCE [LARGE SCALE GENOMIC DNA]</scope>
    <source>
        <strain>ATCC BAA-1114 / GMI1000</strain>
    </source>
</reference>
<accession>Q8XZJ0</accession>
<organism>
    <name type="scientific">Ralstonia nicotianae (strain ATCC BAA-1114 / GMI1000)</name>
    <name type="common">Ralstonia solanacearum</name>
    <dbReference type="NCBI Taxonomy" id="267608"/>
    <lineage>
        <taxon>Bacteria</taxon>
        <taxon>Pseudomonadati</taxon>
        <taxon>Pseudomonadota</taxon>
        <taxon>Betaproteobacteria</taxon>
        <taxon>Burkholderiales</taxon>
        <taxon>Burkholderiaceae</taxon>
        <taxon>Ralstonia</taxon>
        <taxon>Ralstonia solanacearum species complex</taxon>
    </lineage>
</organism>